<dbReference type="EC" id="2.4.2.7" evidence="1"/>
<dbReference type="EMBL" id="CP000230">
    <property type="protein sequence ID" value="ABC21411.1"/>
    <property type="molecule type" value="Genomic_DNA"/>
</dbReference>
<dbReference type="RefSeq" id="WP_011388365.1">
    <property type="nucleotide sequence ID" value="NC_007643.1"/>
</dbReference>
<dbReference type="RefSeq" id="YP_425698.1">
    <property type="nucleotide sequence ID" value="NC_007643.1"/>
</dbReference>
<dbReference type="SMR" id="Q2RWT4"/>
<dbReference type="STRING" id="269796.Rru_A0607"/>
<dbReference type="EnsemblBacteria" id="ABC21411">
    <property type="protein sequence ID" value="ABC21411"/>
    <property type="gene ID" value="Rru_A0607"/>
</dbReference>
<dbReference type="KEGG" id="rru:Rru_A0607"/>
<dbReference type="PATRIC" id="fig|269796.9.peg.660"/>
<dbReference type="eggNOG" id="COG0503">
    <property type="taxonomic scope" value="Bacteria"/>
</dbReference>
<dbReference type="HOGENOM" id="CLU_063339_3_0_5"/>
<dbReference type="PhylomeDB" id="Q2RWT4"/>
<dbReference type="UniPathway" id="UPA00588">
    <property type="reaction ID" value="UER00646"/>
</dbReference>
<dbReference type="Proteomes" id="UP000001929">
    <property type="component" value="Chromosome"/>
</dbReference>
<dbReference type="GO" id="GO:0005737">
    <property type="term" value="C:cytoplasm"/>
    <property type="evidence" value="ECO:0007669"/>
    <property type="project" value="UniProtKB-SubCell"/>
</dbReference>
<dbReference type="GO" id="GO:0002055">
    <property type="term" value="F:adenine binding"/>
    <property type="evidence" value="ECO:0007669"/>
    <property type="project" value="TreeGrafter"/>
</dbReference>
<dbReference type="GO" id="GO:0003999">
    <property type="term" value="F:adenine phosphoribosyltransferase activity"/>
    <property type="evidence" value="ECO:0007669"/>
    <property type="project" value="UniProtKB-UniRule"/>
</dbReference>
<dbReference type="GO" id="GO:0016208">
    <property type="term" value="F:AMP binding"/>
    <property type="evidence" value="ECO:0007669"/>
    <property type="project" value="TreeGrafter"/>
</dbReference>
<dbReference type="GO" id="GO:0006168">
    <property type="term" value="P:adenine salvage"/>
    <property type="evidence" value="ECO:0007669"/>
    <property type="project" value="InterPro"/>
</dbReference>
<dbReference type="GO" id="GO:0044209">
    <property type="term" value="P:AMP salvage"/>
    <property type="evidence" value="ECO:0007669"/>
    <property type="project" value="UniProtKB-UniRule"/>
</dbReference>
<dbReference type="GO" id="GO:0006166">
    <property type="term" value="P:purine ribonucleoside salvage"/>
    <property type="evidence" value="ECO:0007669"/>
    <property type="project" value="UniProtKB-KW"/>
</dbReference>
<dbReference type="CDD" id="cd06223">
    <property type="entry name" value="PRTases_typeI"/>
    <property type="match status" value="1"/>
</dbReference>
<dbReference type="FunFam" id="3.40.50.2020:FF:000021">
    <property type="entry name" value="Adenine phosphoribosyltransferase"/>
    <property type="match status" value="1"/>
</dbReference>
<dbReference type="Gene3D" id="3.40.50.2020">
    <property type="match status" value="1"/>
</dbReference>
<dbReference type="HAMAP" id="MF_00004">
    <property type="entry name" value="Aden_phosphoribosyltr"/>
    <property type="match status" value="1"/>
</dbReference>
<dbReference type="InterPro" id="IPR005764">
    <property type="entry name" value="Ade_phspho_trans"/>
</dbReference>
<dbReference type="InterPro" id="IPR000836">
    <property type="entry name" value="PRibTrfase_dom"/>
</dbReference>
<dbReference type="InterPro" id="IPR029057">
    <property type="entry name" value="PRTase-like"/>
</dbReference>
<dbReference type="InterPro" id="IPR050054">
    <property type="entry name" value="UPRTase/APRTase"/>
</dbReference>
<dbReference type="NCBIfam" id="TIGR01090">
    <property type="entry name" value="apt"/>
    <property type="match status" value="1"/>
</dbReference>
<dbReference type="NCBIfam" id="NF002634">
    <property type="entry name" value="PRK02304.1-3"/>
    <property type="match status" value="1"/>
</dbReference>
<dbReference type="NCBIfam" id="NF002636">
    <property type="entry name" value="PRK02304.1-5"/>
    <property type="match status" value="1"/>
</dbReference>
<dbReference type="PANTHER" id="PTHR32315">
    <property type="entry name" value="ADENINE PHOSPHORIBOSYLTRANSFERASE"/>
    <property type="match status" value="1"/>
</dbReference>
<dbReference type="PANTHER" id="PTHR32315:SF3">
    <property type="entry name" value="ADENINE PHOSPHORIBOSYLTRANSFERASE"/>
    <property type="match status" value="1"/>
</dbReference>
<dbReference type="Pfam" id="PF00156">
    <property type="entry name" value="Pribosyltran"/>
    <property type="match status" value="1"/>
</dbReference>
<dbReference type="SUPFAM" id="SSF53271">
    <property type="entry name" value="PRTase-like"/>
    <property type="match status" value="1"/>
</dbReference>
<dbReference type="PROSITE" id="PS00103">
    <property type="entry name" value="PUR_PYR_PR_TRANSFER"/>
    <property type="match status" value="1"/>
</dbReference>
<accession>Q2RWT4</accession>
<feature type="chain" id="PRO_1000000334" description="Adenine phosphoribosyltransferase">
    <location>
        <begin position="1"/>
        <end position="171"/>
    </location>
</feature>
<organism>
    <name type="scientific">Rhodospirillum rubrum (strain ATCC 11170 / ATH 1.1.1 / DSM 467 / LMG 4362 / NCIMB 8255 / S1)</name>
    <dbReference type="NCBI Taxonomy" id="269796"/>
    <lineage>
        <taxon>Bacteria</taxon>
        <taxon>Pseudomonadati</taxon>
        <taxon>Pseudomonadota</taxon>
        <taxon>Alphaproteobacteria</taxon>
        <taxon>Rhodospirillales</taxon>
        <taxon>Rhodospirillaceae</taxon>
        <taxon>Rhodospirillum</taxon>
    </lineage>
</organism>
<reference key="1">
    <citation type="journal article" date="2011" name="Stand. Genomic Sci.">
        <title>Complete genome sequence of Rhodospirillum rubrum type strain (S1).</title>
        <authorList>
            <person name="Munk A.C."/>
            <person name="Copeland A."/>
            <person name="Lucas S."/>
            <person name="Lapidus A."/>
            <person name="Del Rio T.G."/>
            <person name="Barry K."/>
            <person name="Detter J.C."/>
            <person name="Hammon N."/>
            <person name="Israni S."/>
            <person name="Pitluck S."/>
            <person name="Brettin T."/>
            <person name="Bruce D."/>
            <person name="Han C."/>
            <person name="Tapia R."/>
            <person name="Gilna P."/>
            <person name="Schmutz J."/>
            <person name="Larimer F."/>
            <person name="Land M."/>
            <person name="Kyrpides N.C."/>
            <person name="Mavromatis K."/>
            <person name="Richardson P."/>
            <person name="Rohde M."/>
            <person name="Goeker M."/>
            <person name="Klenk H.P."/>
            <person name="Zhang Y."/>
            <person name="Roberts G.P."/>
            <person name="Reslewic S."/>
            <person name="Schwartz D.C."/>
        </authorList>
    </citation>
    <scope>NUCLEOTIDE SEQUENCE [LARGE SCALE GENOMIC DNA]</scope>
    <source>
        <strain>ATCC 11170 / ATH 1.1.1 / DSM 467 / LMG 4362 / NCIMB 8255 / S1</strain>
    </source>
</reference>
<sequence length="171" mass="18312">MNLKDHIREVPDFPKPGILFYDISTLLADPDAWQVTMGRMAKVVAPRLPDVLAGIESRGFLVAAPLALKLGLGFVMVRKKGKLPGATVRHEYALEYGTDTVEVQEGAVLPGQRVVILDDLLATGGTLNAASELLGKMGANVVGAACIIELSFLKGRERTKVPIDSLVAYDS</sequence>
<name>APT_RHORT</name>
<gene>
    <name evidence="1" type="primary">apt</name>
    <name type="ordered locus">Rru_A0607</name>
</gene>
<proteinExistence type="inferred from homology"/>
<keyword id="KW-0963">Cytoplasm</keyword>
<keyword id="KW-0328">Glycosyltransferase</keyword>
<keyword id="KW-0660">Purine salvage</keyword>
<keyword id="KW-1185">Reference proteome</keyword>
<keyword id="KW-0808">Transferase</keyword>
<comment type="function">
    <text evidence="1">Catalyzes a salvage reaction resulting in the formation of AMP, that is energically less costly than de novo synthesis.</text>
</comment>
<comment type="catalytic activity">
    <reaction evidence="1">
        <text>AMP + diphosphate = 5-phospho-alpha-D-ribose 1-diphosphate + adenine</text>
        <dbReference type="Rhea" id="RHEA:16609"/>
        <dbReference type="ChEBI" id="CHEBI:16708"/>
        <dbReference type="ChEBI" id="CHEBI:33019"/>
        <dbReference type="ChEBI" id="CHEBI:58017"/>
        <dbReference type="ChEBI" id="CHEBI:456215"/>
        <dbReference type="EC" id="2.4.2.7"/>
    </reaction>
</comment>
<comment type="pathway">
    <text evidence="1">Purine metabolism; AMP biosynthesis via salvage pathway; AMP from adenine: step 1/1.</text>
</comment>
<comment type="subunit">
    <text evidence="1">Homodimer.</text>
</comment>
<comment type="subcellular location">
    <subcellularLocation>
        <location evidence="1">Cytoplasm</location>
    </subcellularLocation>
</comment>
<comment type="similarity">
    <text evidence="1">Belongs to the purine/pyrimidine phosphoribosyltransferase family.</text>
</comment>
<protein>
    <recommendedName>
        <fullName evidence="1">Adenine phosphoribosyltransferase</fullName>
        <shortName evidence="1">APRT</shortName>
        <ecNumber evidence="1">2.4.2.7</ecNumber>
    </recommendedName>
</protein>
<evidence type="ECO:0000255" key="1">
    <source>
        <dbReference type="HAMAP-Rule" id="MF_00004"/>
    </source>
</evidence>